<gene>
    <name type="primary">ANKRD17</name>
    <name type="synonym">GTAR</name>
    <name type="synonym">KIAA0697</name>
</gene>
<comment type="function">
    <text evidence="1 5 6 7 8">Could play pivotal roles in cell cycle and DNA regulation (PubMed:19150984). Involved in innate immune defense against viruse by positively regulating the viral dsRNA receptors DDX58 and IFIH1 signaling pathways (PubMed:22328336). Involves in NOD2- and NOD1-mediated responses to bacteria suggesting a role in innate antibacterial immune pathways too (PubMed:23711367). Target of enterovirus 71 which is the major etiological agent of HFMD (hand, foot and mouth disease) (PubMed:17276651). Could play a central role for the formation and/or maintenance of the blood vessels of the circulation system (By similarity).</text>
</comment>
<comment type="subunit">
    <text evidence="6 7 8">Interacts (via N-terminus) with NOD2. Interacts with CDK2, MCM3, MCM5, MCM7, CDC6 and PCNA. Interacts with MAVS and IFIH1. Interacts (via the second ankyrin repeat cluster) with DDX58.</text>
</comment>
<comment type="subunit">
    <text evidence="5">(Microbial infection) Interacts with enterovirus 71/EV71 capsid protein VP1.</text>
</comment>
<comment type="subcellular location">
    <subcellularLocation>
        <location evidence="5 7">Cytoplasm</location>
    </subcellularLocation>
    <subcellularLocation>
        <location evidence="5 6 7">Nucleus</location>
    </subcellularLocation>
    <text evidence="5 6">Detected around the nucleolus. Localized on chromatin in a cell cycle-dependent manner.</text>
</comment>
<comment type="alternative products">
    <event type="alternative splicing"/>
    <isoform>
        <id>O75179-1</id>
        <name>1</name>
        <sequence type="displayed"/>
    </isoform>
    <isoform>
        <id>O75179-2</id>
        <name>2</name>
        <sequence type="described" ref="VSP_028863"/>
    </isoform>
    <isoform>
        <id>O75179-3</id>
        <name>3</name>
        <sequence type="described" ref="VSP_028864 VSP_028865"/>
    </isoform>
    <isoform>
        <id>O75179-4</id>
        <name>4</name>
        <sequence type="described" ref="VSP_028861 VSP_028862"/>
    </isoform>
    <isoform>
        <id>O75179-5</id>
        <name>5</name>
        <sequence type="described" ref="VSP_028859 VSP_028860"/>
    </isoform>
    <isoform>
        <id>O75179-6</id>
        <name>6</name>
        <sequence type="described" ref="VSP_047048"/>
    </isoform>
    <isoform>
        <id>O75179-7</id>
        <name>7</name>
        <sequence type="described" ref="VSP_054757"/>
    </isoform>
</comment>
<comment type="tissue specificity">
    <text evidence="5 6">Ubiquitously expressed.</text>
</comment>
<comment type="PTM">
    <text evidence="6">Phosphorylated by CDK2.</text>
</comment>
<comment type="disease" evidence="9">
    <disease id="DI-06214">
        <name>Chopra-Amiel-Gordon syndrome</name>
        <acronym>CAGS</acronym>
        <description>An autosomal dominant disorder characterized by developmental delay, intellectual disability, speech delay, and dysmorphic facial features. Additional features include growth failure, feeding difficulties, non-specific brain abnormalities, ophthalmological abnormalities, gait and balance disturbance, joint hypermobility, and predisposition to recurrent infections.</description>
        <dbReference type="MIM" id="619504"/>
    </disease>
    <text>The disease is caused by variants affecting the gene represented in this entry.</text>
</comment>
<comment type="sequence caution" evidence="13">
    <conflict type="frameshift">
        <sequence resource="EMBL-CDS" id="AAG48253"/>
    </conflict>
</comment>
<comment type="sequence caution" evidence="13">
    <conflict type="miscellaneous discrepancy">
        <sequence resource="EMBL-CDS" id="AAH04173"/>
    </conflict>
    <text>Contaminating sequence. Potential poly-A sequence.</text>
</comment>
<comment type="sequence caution" evidence="13">
    <conflict type="erroneous initiation">
        <sequence resource="EMBL-CDS" id="BAB15260"/>
    </conflict>
    <text>Truncated N-terminus.</text>
</comment>
<comment type="sequence caution" evidence="13">
    <conflict type="miscellaneous discrepancy">
        <sequence resource="EMBL-CDS" id="BAB15260"/>
    </conflict>
    <text>Contaminating sequence. Potential poly-A sequence.</text>
</comment>
<proteinExistence type="evidence at protein level"/>
<keyword id="KW-0007">Acetylation</keyword>
<keyword id="KW-0025">Alternative splicing</keyword>
<keyword id="KW-0040">ANK repeat</keyword>
<keyword id="KW-0175">Coiled coil</keyword>
<keyword id="KW-0963">Cytoplasm</keyword>
<keyword id="KW-0225">Disease variant</keyword>
<keyword id="KW-0945">Host-virus interaction</keyword>
<keyword id="KW-0391">Immunity</keyword>
<keyword id="KW-0399">Innate immunity</keyword>
<keyword id="KW-0991">Intellectual disability</keyword>
<keyword id="KW-1017">Isopeptide bond</keyword>
<keyword id="KW-0488">Methylation</keyword>
<keyword id="KW-0539">Nucleus</keyword>
<keyword id="KW-0597">Phosphoprotein</keyword>
<keyword id="KW-1267">Proteomics identification</keyword>
<keyword id="KW-1185">Reference proteome</keyword>
<keyword id="KW-0677">Repeat</keyword>
<keyword id="KW-0694">RNA-binding</keyword>
<keyword id="KW-0832">Ubl conjugation</keyword>
<organism>
    <name type="scientific">Homo sapiens</name>
    <name type="common">Human</name>
    <dbReference type="NCBI Taxonomy" id="9606"/>
    <lineage>
        <taxon>Eukaryota</taxon>
        <taxon>Metazoa</taxon>
        <taxon>Chordata</taxon>
        <taxon>Craniata</taxon>
        <taxon>Vertebrata</taxon>
        <taxon>Euteleostomi</taxon>
        <taxon>Mammalia</taxon>
        <taxon>Eutheria</taxon>
        <taxon>Euarchontoglires</taxon>
        <taxon>Primates</taxon>
        <taxon>Haplorrhini</taxon>
        <taxon>Catarrhini</taxon>
        <taxon>Hominidae</taxon>
        <taxon>Homo</taxon>
    </lineage>
</organism>
<sequence length="2603" mass="274258">MEKATVPVAAATAAEGEGSPPAVAAVAGPPAAAEVGGGVGGSSRARSASSPRGMVRVCDLLLKKKPPQQQHHKAKRNRTCRPPSSSESSSDSDNSGGGGGGGGGGGGGGGTSSNNSEEEEDDDDEEEEVSEVESFILDQDDLENPMLETASKLLLSGTADGADLRTVDPETQARLEALLEAAGIGKLSTADGKAFADPEVLRRLTSSVSCALDEAAAALTRMRAESTANAGQSDNRSLAEACSEGDVNAVRKLLIEGRSVNEHTEEGESLLCLACSAGYYELAQVLLAMHANVEDRGIKGDITPLMAAANGGHVKIVKLLLAHKADVNAQSSTGNTALTYACAGGYVDVVKVLLESGASIEDHNENGHTPLMEAGSAGHVEVARLLLENGAGINTHSNEFKESALTLACYKGHLEMVRFLLEAGADQEHKTDEMHTALMEACMDGHVEVARLLLDSGAQVNMPADSFESPLTLAACGGHVELAALLIERGASLEEVNDEGYTPLMEAAREGHEEMVALLLGQGANINAQTEETQETALTLACCGGFLEVADFLIKAGADIELGCSTPLMEAAQEGHLELVKYLLAAGANVHATTATGDTALTYACENGHTDVADVLLQAGADLEHESEGGRTPLMKAARAGHVCTVQFLISKGANVNRTTANNDHTVLSLACAGGHLAVVELLLAHGADPTHRLKDGSTMLIEAAKGGHTSVVCYLLDYPNNLLSAPPPDVTQLTPPSHDLNRAPRVPVQALPMVVPPQEPDKPPANVATTLPIRNKAASKQKSSSHLPANSQDVQGYITNQSPESIVEEAQGKLTELEQRIKEAIEKNAQLQSLELAHADQLTKEKIEELNKTREEQIQKKQKILEELQKVERELQLKTQQQLKKQYLEVKAQRIQLQQQQQQSCQHLGLLTPVGVGEQLSEGDYARLQQVDPVLLKDEPQQTAAQMGFAPIQPLAMPQALPLAAGPLPPGSIANLTELQGVIVGQPVLGQAQLAGLGQGILTETQQGLMVASPAQTLNDTLDDIMAAVSGRASAMSNTPTHSIAASISQPQTPTPSPIISPSAMLPIYPAIDIDAQTESNHDTALTLACAGGHEELVQTLLERGASIEHRDKKGFTPLILAATAGHVGVVEILLDNGADIEAQSERTKDTPLSLACSGGRQEVVELLLARGANKEHRNVSDYTPLSLAASGGYVNIIKILLNAGAEINSRTGSKLGISPLMLAAMNGHTAAVKLLLDMGSDINAQIETNRNTALTLACFQGRTEVVSLLLDRKANVEHRAKTGLTPLMEAASGGYAEVGRVLLDKGADVNAPPVPSSRDTALTIAADKGHYKFCELLIGRGAHIDVRNKKGNTPLWLAANGGHLDVVQLLVQAGADVDAADNRKITPLMAAFRKGHVKVVRYLVKEVNQFPSDSECMRYIATITDKEMLKKCHLCMESIVQAKDRQAAEANKNASILLEELDLEKLREESRRLALAAKREKRKEKRRKKKEEQRRKLEEIEAKNKENFELQAAQEKEKLKVEDEPEVLTEPPSATTTTTIGISATWTTLAGSHGKRNNTITTTSSKRKNRKNKITPENVQIIFDDPLPISYSQPEKVNGESKSSSTSESGDSDNMRISSCSDESSNSNSSRKSDNHSPAVVTTTVSSKKQPSVLVTFPKEERKSVSGKASIKLSETISEGTSNSLSTCTKSGPSPLSSPNGKLTVASPKRGQKREEGWKEVVRRSKKVSVPSTVISRVIGRGGCNINAIREFTGAHIDIDKQKDKTGDRIITIRGGTESTRQATQLINALIKDPDKEIDELIPKNRLKSSSANSKIGSSAPTTTAANTSLMGIKMTTVALSSTSQTATALTVPAISSASTHKTIKNPVNNVRPGFPVSLPLAYPPPQFAHALLAAQTFQQIRPPRLPMTHFGGTFPPAQSTWGPFPVRPLSPARATNSPKPHMVPRHSNQNSSGSQVNSAGSLTSSPTTTTSSSASTVPGTSTNGSPSSPSVRRQLFVTVVKTSNATTTTVTTTASNNNTAPTNATYPMPTAKEHYPVSSPSSPSPPAQPGGVSRNSPLDCGSASPNKVASSSEQEAGSPPVVETTNTRPPNSSSSSGSSSAHSNQQQPPGSVSQEPRPPLQQSQVPPPEVRMTVPPLATSSAPVAVPSTAPVTYPMPQTPMGCPQPTPKMETPAIRPPPHGTTAPHKNSASVQNSSVAVLSVNHIKRPHSVPSSVQLPSTLSTQSACQNSVHPANKPIAPNFSAPLPFGPFSTLFENSPTSAHAFWGGSVVSSQSTPESMLSGKSSYLPNSDPLHQSDTSKAPGFRPPLQRPAPSPSGIVNMDSPYGSVTPSSTHLGNFASNISGGQMYGPGAPLGGAPAAANFNRQHFSPLSLLTPCSSASNDSSAQSVSSGVRAPSPAPSSVPLGSEKPSNVSQDRKVPVPIGTERSARIRQTGTSAPSVIGSNLSTSVGHSGIWSFEGIGGNQDKVDWCNPGMGNPMIHRPMSDPGVFSQHQAMERDSTGIVTPSGTFHQHVPAGYMDFPKVGGMPFSVYGNAMIPPVAPIPDGAGGPIFNGPHAADPSWNSLIKMVSSSTENNGPQTVWTGPWAPHMNSVHMNQLG</sequence>
<dbReference type="EMBL" id="AF308285">
    <property type="protein sequence ID" value="AAG48253.1"/>
    <property type="status" value="ALT_FRAME"/>
    <property type="molecule type" value="mRNA"/>
</dbReference>
<dbReference type="EMBL" id="AC053527">
    <property type="status" value="NOT_ANNOTATED_CDS"/>
    <property type="molecule type" value="Genomic_DNA"/>
</dbReference>
<dbReference type="EMBL" id="AC095053">
    <property type="status" value="NOT_ANNOTATED_CDS"/>
    <property type="molecule type" value="Genomic_DNA"/>
</dbReference>
<dbReference type="EMBL" id="AC105757">
    <property type="status" value="NOT_ANNOTATED_CDS"/>
    <property type="molecule type" value="Genomic_DNA"/>
</dbReference>
<dbReference type="EMBL" id="CH471057">
    <property type="protein sequence ID" value="EAX05655.1"/>
    <property type="molecule type" value="Genomic_DNA"/>
</dbReference>
<dbReference type="EMBL" id="BC004173">
    <property type="protein sequence ID" value="AAH04173.1"/>
    <property type="status" value="ALT_SEQ"/>
    <property type="molecule type" value="mRNA"/>
</dbReference>
<dbReference type="EMBL" id="BC007747">
    <property type="protein sequence ID" value="AAH07747.2"/>
    <property type="molecule type" value="mRNA"/>
</dbReference>
<dbReference type="EMBL" id="BC019963">
    <property type="protein sequence ID" value="AAH19963.1"/>
    <property type="molecule type" value="mRNA"/>
</dbReference>
<dbReference type="EMBL" id="BC043394">
    <property type="protein sequence ID" value="AAH43394.1"/>
    <property type="molecule type" value="mRNA"/>
</dbReference>
<dbReference type="EMBL" id="AB014597">
    <property type="protein sequence ID" value="BAA31672.2"/>
    <property type="molecule type" value="mRNA"/>
</dbReference>
<dbReference type="EMBL" id="AL831903">
    <property type="protein sequence ID" value="CAD38571.2"/>
    <property type="molecule type" value="mRNA"/>
</dbReference>
<dbReference type="EMBL" id="AK025859">
    <property type="protein sequence ID" value="BAB15260.1"/>
    <property type="status" value="ALT_SEQ"/>
    <property type="molecule type" value="mRNA"/>
</dbReference>
<dbReference type="CCDS" id="CCDS34003.1">
    <molecule id="O75179-6"/>
</dbReference>
<dbReference type="CCDS" id="CCDS34004.1">
    <molecule id="O75179-1"/>
</dbReference>
<dbReference type="CCDS" id="CCDS68721.1">
    <molecule id="O75179-7"/>
</dbReference>
<dbReference type="PIR" id="T00353">
    <property type="entry name" value="T00353"/>
</dbReference>
<dbReference type="RefSeq" id="NP_001273700.1">
    <molecule id="O75179-7"/>
    <property type="nucleotide sequence ID" value="NM_001286771.3"/>
</dbReference>
<dbReference type="RefSeq" id="NP_056389.1">
    <molecule id="O75179-2"/>
    <property type="nucleotide sequence ID" value="NM_015574.2"/>
</dbReference>
<dbReference type="RefSeq" id="NP_115593.3">
    <molecule id="O75179-1"/>
    <property type="nucleotide sequence ID" value="NM_032217.4"/>
</dbReference>
<dbReference type="RefSeq" id="NP_942592.1">
    <molecule id="O75179-6"/>
    <property type="nucleotide sequence ID" value="NM_198889.3"/>
</dbReference>
<dbReference type="SMR" id="O75179"/>
<dbReference type="BioGRID" id="117519">
    <property type="interactions" value="237"/>
</dbReference>
<dbReference type="DIP" id="DIP-47290N"/>
<dbReference type="FunCoup" id="O75179">
    <property type="interactions" value="4527"/>
</dbReference>
<dbReference type="IntAct" id="O75179">
    <property type="interactions" value="112"/>
</dbReference>
<dbReference type="MINT" id="O75179"/>
<dbReference type="STRING" id="9606.ENSP00000351416"/>
<dbReference type="GlyCosmos" id="O75179">
    <property type="glycosylation" value="18 sites, 2 glycans"/>
</dbReference>
<dbReference type="GlyGen" id="O75179">
    <property type="glycosylation" value="50 sites, 1 N-linked glycan (1 site), 2 O-linked glycans (46 sites)"/>
</dbReference>
<dbReference type="iPTMnet" id="O75179"/>
<dbReference type="MetOSite" id="O75179"/>
<dbReference type="PhosphoSitePlus" id="O75179"/>
<dbReference type="SwissPalm" id="O75179"/>
<dbReference type="BioMuta" id="ANKRD17"/>
<dbReference type="jPOST" id="O75179"/>
<dbReference type="MassIVE" id="O75179"/>
<dbReference type="PaxDb" id="9606-ENSP00000351416"/>
<dbReference type="PeptideAtlas" id="O75179"/>
<dbReference type="ProteomicsDB" id="18505"/>
<dbReference type="ProteomicsDB" id="33844"/>
<dbReference type="ProteomicsDB" id="49850">
    <molecule id="O75179-1"/>
</dbReference>
<dbReference type="ProteomicsDB" id="49851">
    <molecule id="O75179-2"/>
</dbReference>
<dbReference type="ProteomicsDB" id="49852">
    <molecule id="O75179-3"/>
</dbReference>
<dbReference type="ProteomicsDB" id="49853">
    <molecule id="O75179-4"/>
</dbReference>
<dbReference type="ProteomicsDB" id="49854">
    <molecule id="O75179-5"/>
</dbReference>
<dbReference type="Pumba" id="O75179"/>
<dbReference type="Antibodypedia" id="24452">
    <property type="antibodies" value="148 antibodies from 17 providers"/>
</dbReference>
<dbReference type="DNASU" id="26057"/>
<dbReference type="Ensembl" id="ENST00000330838.10">
    <molecule id="O75179-6"/>
    <property type="protein sequence ID" value="ENSP00000332265.6"/>
    <property type="gene ID" value="ENSG00000132466.20"/>
</dbReference>
<dbReference type="Ensembl" id="ENST00000358602.9">
    <molecule id="O75179-1"/>
    <property type="protein sequence ID" value="ENSP00000351416.4"/>
    <property type="gene ID" value="ENSG00000132466.20"/>
</dbReference>
<dbReference type="Ensembl" id="ENST00000509867.6">
    <molecule id="O75179-7"/>
    <property type="protein sequence ID" value="ENSP00000427151.2"/>
    <property type="gene ID" value="ENSG00000132466.20"/>
</dbReference>
<dbReference type="GeneID" id="26057"/>
<dbReference type="KEGG" id="hsa:26057"/>
<dbReference type="MANE-Select" id="ENST00000358602.9">
    <property type="protein sequence ID" value="ENSP00000351416.4"/>
    <property type="RefSeq nucleotide sequence ID" value="NM_032217.5"/>
    <property type="RefSeq protein sequence ID" value="NP_115593.3"/>
</dbReference>
<dbReference type="UCSC" id="uc003hgo.5">
    <molecule id="O75179-1"/>
    <property type="organism name" value="human"/>
</dbReference>
<dbReference type="AGR" id="HGNC:23575"/>
<dbReference type="CTD" id="26057"/>
<dbReference type="DisGeNET" id="26057"/>
<dbReference type="GeneCards" id="ANKRD17"/>
<dbReference type="GeneReviews" id="ANKRD17"/>
<dbReference type="HGNC" id="HGNC:23575">
    <property type="gene designation" value="ANKRD17"/>
</dbReference>
<dbReference type="HPA" id="ENSG00000132466">
    <property type="expression patterns" value="Low tissue specificity"/>
</dbReference>
<dbReference type="MalaCards" id="ANKRD17"/>
<dbReference type="MIM" id="615929">
    <property type="type" value="gene"/>
</dbReference>
<dbReference type="MIM" id="619504">
    <property type="type" value="phenotype"/>
</dbReference>
<dbReference type="neXtProt" id="NX_O75179"/>
<dbReference type="OpenTargets" id="ENSG00000132466"/>
<dbReference type="Orphanet" id="528084">
    <property type="disease" value="Non-specific syndromic intellectual disability"/>
</dbReference>
<dbReference type="PharmGKB" id="PA134943225"/>
<dbReference type="VEuPathDB" id="HostDB:ENSG00000132466"/>
<dbReference type="eggNOG" id="KOG0504">
    <property type="taxonomic scope" value="Eukaryota"/>
</dbReference>
<dbReference type="eggNOG" id="KOG4369">
    <property type="taxonomic scope" value="Eukaryota"/>
</dbReference>
<dbReference type="GeneTree" id="ENSGT00940000153768"/>
<dbReference type="HOGENOM" id="CLU_000590_0_1_1"/>
<dbReference type="InParanoid" id="O75179"/>
<dbReference type="OMA" id="NDNGHCA"/>
<dbReference type="OrthoDB" id="9534190at2759"/>
<dbReference type="PAN-GO" id="O75179">
    <property type="GO annotations" value="3 GO annotations based on evolutionary models"/>
</dbReference>
<dbReference type="PhylomeDB" id="O75179"/>
<dbReference type="TreeFam" id="TF328552"/>
<dbReference type="PathwayCommons" id="O75179"/>
<dbReference type="SignaLink" id="O75179"/>
<dbReference type="BioGRID-ORCS" id="26057">
    <property type="hits" value="132 hits in 1170 CRISPR screens"/>
</dbReference>
<dbReference type="CD-CODE" id="232F8A39">
    <property type="entry name" value="P-body"/>
</dbReference>
<dbReference type="CD-CODE" id="DEE660B4">
    <property type="entry name" value="Stress granule"/>
</dbReference>
<dbReference type="ChiTaRS" id="ANKRD17">
    <property type="organism name" value="human"/>
</dbReference>
<dbReference type="GeneWiki" id="ANKRD17"/>
<dbReference type="GenomeRNAi" id="26057"/>
<dbReference type="Pharos" id="O75179">
    <property type="development level" value="Tbio"/>
</dbReference>
<dbReference type="PRO" id="PR:O75179"/>
<dbReference type="Proteomes" id="UP000005640">
    <property type="component" value="Chromosome 4"/>
</dbReference>
<dbReference type="RNAct" id="O75179">
    <property type="molecule type" value="protein"/>
</dbReference>
<dbReference type="Bgee" id="ENSG00000132466">
    <property type="expression patterns" value="Expressed in secondary oocyte and 210 other cell types or tissues"/>
</dbReference>
<dbReference type="ExpressionAtlas" id="O75179">
    <property type="expression patterns" value="baseline and differential"/>
</dbReference>
<dbReference type="GO" id="GO:0000785">
    <property type="term" value="C:chromatin"/>
    <property type="evidence" value="ECO:0000314"/>
    <property type="project" value="UniProtKB"/>
</dbReference>
<dbReference type="GO" id="GO:0005737">
    <property type="term" value="C:cytoplasm"/>
    <property type="evidence" value="ECO:0000314"/>
    <property type="project" value="UniProtKB"/>
</dbReference>
<dbReference type="GO" id="GO:0016020">
    <property type="term" value="C:membrane"/>
    <property type="evidence" value="ECO:0007005"/>
    <property type="project" value="UniProtKB"/>
</dbReference>
<dbReference type="GO" id="GO:0031965">
    <property type="term" value="C:nuclear membrane"/>
    <property type="evidence" value="ECO:0000314"/>
    <property type="project" value="HPA"/>
</dbReference>
<dbReference type="GO" id="GO:0005654">
    <property type="term" value="C:nucleoplasm"/>
    <property type="evidence" value="ECO:0000314"/>
    <property type="project" value="HPA"/>
</dbReference>
<dbReference type="GO" id="GO:0005634">
    <property type="term" value="C:nucleus"/>
    <property type="evidence" value="ECO:0000314"/>
    <property type="project" value="UniProtKB"/>
</dbReference>
<dbReference type="GO" id="GO:0003682">
    <property type="term" value="F:chromatin binding"/>
    <property type="evidence" value="ECO:0000314"/>
    <property type="project" value="UniProtKB"/>
</dbReference>
<dbReference type="GO" id="GO:0003723">
    <property type="term" value="F:RNA binding"/>
    <property type="evidence" value="ECO:0007005"/>
    <property type="project" value="UniProtKB"/>
</dbReference>
<dbReference type="GO" id="GO:0042742">
    <property type="term" value="P:defense response to bacterium"/>
    <property type="evidence" value="ECO:0000314"/>
    <property type="project" value="UniProtKB"/>
</dbReference>
<dbReference type="GO" id="GO:0045087">
    <property type="term" value="P:innate immune response"/>
    <property type="evidence" value="ECO:0000314"/>
    <property type="project" value="UniProtKB"/>
</dbReference>
<dbReference type="GO" id="GO:0043123">
    <property type="term" value="P:positive regulation of canonical NF-kappaB signal transduction"/>
    <property type="evidence" value="ECO:0000314"/>
    <property type="project" value="UniProtKB"/>
</dbReference>
<dbReference type="GO" id="GO:0045787">
    <property type="term" value="P:positive regulation of cell cycle"/>
    <property type="evidence" value="ECO:0000315"/>
    <property type="project" value="UniProtKB"/>
</dbReference>
<dbReference type="GO" id="GO:1900087">
    <property type="term" value="P:positive regulation of G1/S transition of mitotic cell cycle"/>
    <property type="evidence" value="ECO:0000315"/>
    <property type="project" value="UniProtKB"/>
</dbReference>
<dbReference type="GO" id="GO:1900245">
    <property type="term" value="P:positive regulation of MDA-5 signaling pathway"/>
    <property type="evidence" value="ECO:0000314"/>
    <property type="project" value="UniProtKB"/>
</dbReference>
<dbReference type="GO" id="GO:1900246">
    <property type="term" value="P:positive regulation of RIG-I signaling pathway"/>
    <property type="evidence" value="ECO:0000314"/>
    <property type="project" value="UniProtKB"/>
</dbReference>
<dbReference type="GO" id="GO:0006275">
    <property type="term" value="P:regulation of DNA replication"/>
    <property type="evidence" value="ECO:0000315"/>
    <property type="project" value="UniProtKB"/>
</dbReference>
<dbReference type="CDD" id="cd22502">
    <property type="entry name" value="KH-I_ANKRD17"/>
    <property type="match status" value="1"/>
</dbReference>
<dbReference type="CDD" id="cd22249">
    <property type="entry name" value="UDM1_RNF168_RNF169-like"/>
    <property type="match status" value="1"/>
</dbReference>
<dbReference type="FunFam" id="1.25.40.20:FF:000046">
    <property type="entry name" value="Ankyrin repeat and KH domain-containing protein 1"/>
    <property type="match status" value="1"/>
</dbReference>
<dbReference type="FunFam" id="1.25.40.20:FF:000114">
    <property type="entry name" value="ankyrin repeat and KH domain-containing protein 1 isoform X2"/>
    <property type="match status" value="1"/>
</dbReference>
<dbReference type="FunFam" id="1.25.40.20:FF:000062">
    <property type="entry name" value="ankyrin repeat domain-containing protein 17"/>
    <property type="match status" value="1"/>
</dbReference>
<dbReference type="FunFam" id="1.25.40.20:FF:000012">
    <property type="entry name" value="ankyrin repeat domain-containing protein 17 isoform X1"/>
    <property type="match status" value="1"/>
</dbReference>
<dbReference type="FunFam" id="3.30.1370.10:FF:000031">
    <property type="entry name" value="ankyrin repeat domain-containing protein 17 isoform X1"/>
    <property type="match status" value="1"/>
</dbReference>
<dbReference type="FunFam" id="1.25.40.20:FF:000014">
    <property type="entry name" value="ankyrin repeat domain-containing protein 17 isoform X2"/>
    <property type="match status" value="1"/>
</dbReference>
<dbReference type="FunFam" id="1.25.40.20:FF:000055">
    <property type="entry name" value="ankyrin repeat domain-containing protein 17 isoform X2"/>
    <property type="match status" value="1"/>
</dbReference>
<dbReference type="FunFam" id="1.25.40.20:FF:000161">
    <property type="entry name" value="ankyrin repeat domain-containing protein 17 isoform X3"/>
    <property type="match status" value="1"/>
</dbReference>
<dbReference type="Gene3D" id="1.25.40.20">
    <property type="entry name" value="Ankyrin repeat-containing domain"/>
    <property type="match status" value="8"/>
</dbReference>
<dbReference type="Gene3D" id="3.30.1370.10">
    <property type="entry name" value="K Homology domain, type 1"/>
    <property type="match status" value="1"/>
</dbReference>
<dbReference type="InterPro" id="IPR051631">
    <property type="entry name" value="Ankyrin-KH/SAM_domain"/>
</dbReference>
<dbReference type="InterPro" id="IPR002110">
    <property type="entry name" value="Ankyrin_rpt"/>
</dbReference>
<dbReference type="InterPro" id="IPR036770">
    <property type="entry name" value="Ankyrin_rpt-contain_sf"/>
</dbReference>
<dbReference type="InterPro" id="IPR047375">
    <property type="entry name" value="KH-I_ANKRD17"/>
</dbReference>
<dbReference type="InterPro" id="IPR004087">
    <property type="entry name" value="KH_dom"/>
</dbReference>
<dbReference type="InterPro" id="IPR004088">
    <property type="entry name" value="KH_dom_type_1"/>
</dbReference>
<dbReference type="InterPro" id="IPR036612">
    <property type="entry name" value="KH_dom_type_1_sf"/>
</dbReference>
<dbReference type="PANTHER" id="PTHR23206:SF1">
    <property type="entry name" value="ANKYRIN REPEAT DOMAIN-CONTAINING PROTEIN 17"/>
    <property type="match status" value="1"/>
</dbReference>
<dbReference type="PANTHER" id="PTHR23206">
    <property type="entry name" value="MASK PROTEIN"/>
    <property type="match status" value="1"/>
</dbReference>
<dbReference type="Pfam" id="PF00023">
    <property type="entry name" value="Ank"/>
    <property type="match status" value="3"/>
</dbReference>
<dbReference type="Pfam" id="PF12796">
    <property type="entry name" value="Ank_2"/>
    <property type="match status" value="8"/>
</dbReference>
<dbReference type="Pfam" id="PF00013">
    <property type="entry name" value="KH_1"/>
    <property type="match status" value="1"/>
</dbReference>
<dbReference type="PRINTS" id="PR01415">
    <property type="entry name" value="ANKYRIN"/>
</dbReference>
<dbReference type="SMART" id="SM00248">
    <property type="entry name" value="ANK"/>
    <property type="match status" value="25"/>
</dbReference>
<dbReference type="SMART" id="SM00322">
    <property type="entry name" value="KH"/>
    <property type="match status" value="1"/>
</dbReference>
<dbReference type="SUPFAM" id="SSF48403">
    <property type="entry name" value="Ankyrin repeat"/>
    <property type="match status" value="3"/>
</dbReference>
<dbReference type="SUPFAM" id="SSF54791">
    <property type="entry name" value="Eukaryotic type KH-domain (KH-domain type I)"/>
    <property type="match status" value="1"/>
</dbReference>
<dbReference type="PROSITE" id="PS50297">
    <property type="entry name" value="ANK_REP_REGION"/>
    <property type="match status" value="1"/>
</dbReference>
<dbReference type="PROSITE" id="PS50088">
    <property type="entry name" value="ANK_REPEAT"/>
    <property type="match status" value="20"/>
</dbReference>
<dbReference type="PROSITE" id="PS50084">
    <property type="entry name" value="KH_TYPE_1"/>
    <property type="match status" value="1"/>
</dbReference>
<name>ANR17_HUMAN</name>
<reference key="1">
    <citation type="journal article" date="2001" name="Cancer Immun.">
        <title>Humoral immunity to human breast cancer: antigen definition and quantitative analysis of mRNA expression.</title>
        <authorList>
            <person name="Scanlan M.J."/>
            <person name="Gout I."/>
            <person name="Gordon C.M."/>
            <person name="Williamson B."/>
            <person name="Stockert E."/>
            <person name="Gure A.O."/>
            <person name="Jaeger D."/>
            <person name="Chen Y.-T."/>
            <person name="Mackay A."/>
            <person name="O'Hare M.J."/>
            <person name="Old L.J."/>
        </authorList>
    </citation>
    <scope>NUCLEOTIDE SEQUENCE [MRNA] (ISOFORM 3)</scope>
    <source>
        <tissue>Mammary gland</tissue>
    </source>
</reference>
<reference key="2">
    <citation type="journal article" date="2005" name="Nature">
        <title>Generation and annotation of the DNA sequences of human chromosomes 2 and 4.</title>
        <authorList>
            <person name="Hillier L.W."/>
            <person name="Graves T.A."/>
            <person name="Fulton R.S."/>
            <person name="Fulton L.A."/>
            <person name="Pepin K.H."/>
            <person name="Minx P."/>
            <person name="Wagner-McPherson C."/>
            <person name="Layman D."/>
            <person name="Wylie K."/>
            <person name="Sekhon M."/>
            <person name="Becker M.C."/>
            <person name="Fewell G.A."/>
            <person name="Delehaunty K.D."/>
            <person name="Miner T.L."/>
            <person name="Nash W.E."/>
            <person name="Kremitzki C."/>
            <person name="Oddy L."/>
            <person name="Du H."/>
            <person name="Sun H."/>
            <person name="Bradshaw-Cordum H."/>
            <person name="Ali J."/>
            <person name="Carter J."/>
            <person name="Cordes M."/>
            <person name="Harris A."/>
            <person name="Isak A."/>
            <person name="van Brunt A."/>
            <person name="Nguyen C."/>
            <person name="Du F."/>
            <person name="Courtney L."/>
            <person name="Kalicki J."/>
            <person name="Ozersky P."/>
            <person name="Abbott S."/>
            <person name="Armstrong J."/>
            <person name="Belter E.A."/>
            <person name="Caruso L."/>
            <person name="Cedroni M."/>
            <person name="Cotton M."/>
            <person name="Davidson T."/>
            <person name="Desai A."/>
            <person name="Elliott G."/>
            <person name="Erb T."/>
            <person name="Fronick C."/>
            <person name="Gaige T."/>
            <person name="Haakenson W."/>
            <person name="Haglund K."/>
            <person name="Holmes A."/>
            <person name="Harkins R."/>
            <person name="Kim K."/>
            <person name="Kruchowski S.S."/>
            <person name="Strong C.M."/>
            <person name="Grewal N."/>
            <person name="Goyea E."/>
            <person name="Hou S."/>
            <person name="Levy A."/>
            <person name="Martinka S."/>
            <person name="Mead K."/>
            <person name="McLellan M.D."/>
            <person name="Meyer R."/>
            <person name="Randall-Maher J."/>
            <person name="Tomlinson C."/>
            <person name="Dauphin-Kohlberg S."/>
            <person name="Kozlowicz-Reilly A."/>
            <person name="Shah N."/>
            <person name="Swearengen-Shahid S."/>
            <person name="Snider J."/>
            <person name="Strong J.T."/>
            <person name="Thompson J."/>
            <person name="Yoakum M."/>
            <person name="Leonard S."/>
            <person name="Pearman C."/>
            <person name="Trani L."/>
            <person name="Radionenko M."/>
            <person name="Waligorski J.E."/>
            <person name="Wang C."/>
            <person name="Rock S.M."/>
            <person name="Tin-Wollam A.-M."/>
            <person name="Maupin R."/>
            <person name="Latreille P."/>
            <person name="Wendl M.C."/>
            <person name="Yang S.-P."/>
            <person name="Pohl C."/>
            <person name="Wallis J.W."/>
            <person name="Spieth J."/>
            <person name="Bieri T.A."/>
            <person name="Berkowicz N."/>
            <person name="Nelson J.O."/>
            <person name="Osborne J."/>
            <person name="Ding L."/>
            <person name="Meyer R."/>
            <person name="Sabo A."/>
            <person name="Shotland Y."/>
            <person name="Sinha P."/>
            <person name="Wohldmann P.E."/>
            <person name="Cook L.L."/>
            <person name="Hickenbotham M.T."/>
            <person name="Eldred J."/>
            <person name="Williams D."/>
            <person name="Jones T.A."/>
            <person name="She X."/>
            <person name="Ciccarelli F.D."/>
            <person name="Izaurralde E."/>
            <person name="Taylor J."/>
            <person name="Schmutz J."/>
            <person name="Myers R.M."/>
            <person name="Cox D.R."/>
            <person name="Huang X."/>
            <person name="McPherson J.D."/>
            <person name="Mardis E.R."/>
            <person name="Clifton S.W."/>
            <person name="Warren W.C."/>
            <person name="Chinwalla A.T."/>
            <person name="Eddy S.R."/>
            <person name="Marra M.A."/>
            <person name="Ovcharenko I."/>
            <person name="Furey T.S."/>
            <person name="Miller W."/>
            <person name="Eichler E.E."/>
            <person name="Bork P."/>
            <person name="Suyama M."/>
            <person name="Torrents D."/>
            <person name="Waterston R.H."/>
            <person name="Wilson R.K."/>
        </authorList>
    </citation>
    <scope>NUCLEOTIDE SEQUENCE [LARGE SCALE GENOMIC DNA]</scope>
</reference>
<reference key="3">
    <citation type="submission" date="2005-07" db="EMBL/GenBank/DDBJ databases">
        <authorList>
            <person name="Mural R.J."/>
            <person name="Istrail S."/>
            <person name="Sutton G.G."/>
            <person name="Florea L."/>
            <person name="Halpern A.L."/>
            <person name="Mobarry C.M."/>
            <person name="Lippert R."/>
            <person name="Walenz B."/>
            <person name="Shatkay H."/>
            <person name="Dew I."/>
            <person name="Miller J.R."/>
            <person name="Flanigan M.J."/>
            <person name="Edwards N.J."/>
            <person name="Bolanos R."/>
            <person name="Fasulo D."/>
            <person name="Halldorsson B.V."/>
            <person name="Hannenhalli S."/>
            <person name="Turner R."/>
            <person name="Yooseph S."/>
            <person name="Lu F."/>
            <person name="Nusskern D.R."/>
            <person name="Shue B.C."/>
            <person name="Zheng X.H."/>
            <person name="Zhong F."/>
            <person name="Delcher A.L."/>
            <person name="Huson D.H."/>
            <person name="Kravitz S.A."/>
            <person name="Mouchard L."/>
            <person name="Reinert K."/>
            <person name="Remington K.A."/>
            <person name="Clark A.G."/>
            <person name="Waterman M.S."/>
            <person name="Eichler E.E."/>
            <person name="Adams M.D."/>
            <person name="Hunkapiller M.W."/>
            <person name="Myers E.W."/>
            <person name="Venter J.C."/>
        </authorList>
    </citation>
    <scope>NUCLEOTIDE SEQUENCE [LARGE SCALE GENOMIC DNA]</scope>
</reference>
<reference key="4">
    <citation type="journal article" date="2004" name="Genome Res.">
        <title>The status, quality, and expansion of the NIH full-length cDNA project: the Mammalian Gene Collection (MGC).</title>
        <authorList>
            <consortium name="The MGC Project Team"/>
        </authorList>
    </citation>
    <scope>NUCLEOTIDE SEQUENCE [LARGE SCALE MRNA] (ISOFORMS 1 AND 5)</scope>
    <scope>NUCLEOTIDE SEQUENCE [LARGE SCALE MRNA] OF 181-2603 (ISOFORM 4)</scope>
    <source>
        <tissue>Lymph</tissue>
        <tissue>Muscle</tissue>
        <tissue>Placenta</tissue>
        <tissue>Uterus</tissue>
    </source>
</reference>
<reference key="5">
    <citation type="journal article" date="1998" name="DNA Res.">
        <title>Prediction of the coding sequences of unidentified human genes. X. The complete sequences of 100 new cDNA clones from brain which can code for large proteins in vitro.</title>
        <authorList>
            <person name="Ishikawa K."/>
            <person name="Nagase T."/>
            <person name="Suyama M."/>
            <person name="Miyajima N."/>
            <person name="Tanaka A."/>
            <person name="Kotani H."/>
            <person name="Nomura N."/>
            <person name="Ohara O."/>
        </authorList>
    </citation>
    <scope>NUCLEOTIDE SEQUENCE [LARGE SCALE MRNA] OF 117-2603 (ISOFORM 2)</scope>
    <source>
        <tissue>Brain</tissue>
    </source>
</reference>
<reference key="6">
    <citation type="journal article" date="2002" name="DNA Res.">
        <title>Construction of expression-ready cDNA clones for KIAA genes: manual curation of 330 KIAA cDNA clones.</title>
        <authorList>
            <person name="Nakajima D."/>
            <person name="Okazaki N."/>
            <person name="Yamakawa H."/>
            <person name="Kikuno R."/>
            <person name="Ohara O."/>
            <person name="Nagase T."/>
        </authorList>
    </citation>
    <scope>SEQUENCE REVISION</scope>
</reference>
<reference key="7">
    <citation type="journal article" date="2007" name="BMC Genomics">
        <title>The full-ORF clone resource of the German cDNA consortium.</title>
        <authorList>
            <person name="Bechtel S."/>
            <person name="Rosenfelder H."/>
            <person name="Duda A."/>
            <person name="Schmidt C.P."/>
            <person name="Ernst U."/>
            <person name="Wellenreuther R."/>
            <person name="Mehrle A."/>
            <person name="Schuster C."/>
            <person name="Bahr A."/>
            <person name="Bloecker H."/>
            <person name="Heubner D."/>
            <person name="Hoerlein A."/>
            <person name="Michel G."/>
            <person name="Wedler H."/>
            <person name="Koehrer K."/>
            <person name="Ottenwaelder B."/>
            <person name="Poustka A."/>
            <person name="Wiemann S."/>
            <person name="Schupp I."/>
        </authorList>
    </citation>
    <scope>NUCLEOTIDE SEQUENCE [LARGE SCALE MRNA] OF 705-1487 (ISOFORM 1)</scope>
    <source>
        <tissue>Brain</tissue>
    </source>
</reference>
<reference key="8">
    <citation type="journal article" date="2004" name="Nat. Genet.">
        <title>Complete sequencing and characterization of 21,243 full-length human cDNAs.</title>
        <authorList>
            <person name="Ota T."/>
            <person name="Suzuki Y."/>
            <person name="Nishikawa T."/>
            <person name="Otsuki T."/>
            <person name="Sugiyama T."/>
            <person name="Irie R."/>
            <person name="Wakamatsu A."/>
            <person name="Hayashi K."/>
            <person name="Sato H."/>
            <person name="Nagai K."/>
            <person name="Kimura K."/>
            <person name="Makita H."/>
            <person name="Sekine M."/>
            <person name="Obayashi M."/>
            <person name="Nishi T."/>
            <person name="Shibahara T."/>
            <person name="Tanaka T."/>
            <person name="Ishii S."/>
            <person name="Yamamoto J."/>
            <person name="Saito K."/>
            <person name="Kawai Y."/>
            <person name="Isono Y."/>
            <person name="Nakamura Y."/>
            <person name="Nagahari K."/>
            <person name="Murakami K."/>
            <person name="Yasuda T."/>
            <person name="Iwayanagi T."/>
            <person name="Wagatsuma M."/>
            <person name="Shiratori A."/>
            <person name="Sudo H."/>
            <person name="Hosoiri T."/>
            <person name="Kaku Y."/>
            <person name="Kodaira H."/>
            <person name="Kondo H."/>
            <person name="Sugawara M."/>
            <person name="Takahashi M."/>
            <person name="Kanda K."/>
            <person name="Yokoi T."/>
            <person name="Furuya T."/>
            <person name="Kikkawa E."/>
            <person name="Omura Y."/>
            <person name="Abe K."/>
            <person name="Kamihara K."/>
            <person name="Katsuta N."/>
            <person name="Sato K."/>
            <person name="Tanikawa M."/>
            <person name="Yamazaki M."/>
            <person name="Ninomiya K."/>
            <person name="Ishibashi T."/>
            <person name="Yamashita H."/>
            <person name="Murakawa K."/>
            <person name="Fujimori K."/>
            <person name="Tanai H."/>
            <person name="Kimata M."/>
            <person name="Watanabe M."/>
            <person name="Hiraoka S."/>
            <person name="Chiba Y."/>
            <person name="Ishida S."/>
            <person name="Ono Y."/>
            <person name="Takiguchi S."/>
            <person name="Watanabe S."/>
            <person name="Yosida M."/>
            <person name="Hotuta T."/>
            <person name="Kusano J."/>
            <person name="Kanehori K."/>
            <person name="Takahashi-Fujii A."/>
            <person name="Hara H."/>
            <person name="Tanase T.-O."/>
            <person name="Nomura Y."/>
            <person name="Togiya S."/>
            <person name="Komai F."/>
            <person name="Hara R."/>
            <person name="Takeuchi K."/>
            <person name="Arita M."/>
            <person name="Imose N."/>
            <person name="Musashino K."/>
            <person name="Yuuki H."/>
            <person name="Oshima A."/>
            <person name="Sasaki N."/>
            <person name="Aotsuka S."/>
            <person name="Yoshikawa Y."/>
            <person name="Matsunawa H."/>
            <person name="Ichihara T."/>
            <person name="Shiohata N."/>
            <person name="Sano S."/>
            <person name="Moriya S."/>
            <person name="Momiyama H."/>
            <person name="Satoh N."/>
            <person name="Takami S."/>
            <person name="Terashima Y."/>
            <person name="Suzuki O."/>
            <person name="Nakagawa S."/>
            <person name="Senoh A."/>
            <person name="Mizoguchi H."/>
            <person name="Goto Y."/>
            <person name="Shimizu F."/>
            <person name="Wakebe H."/>
            <person name="Hishigaki H."/>
            <person name="Watanabe T."/>
            <person name="Sugiyama A."/>
            <person name="Takemoto M."/>
            <person name="Kawakami B."/>
            <person name="Yamazaki M."/>
            <person name="Watanabe K."/>
            <person name="Kumagai A."/>
            <person name="Itakura S."/>
            <person name="Fukuzumi Y."/>
            <person name="Fujimori Y."/>
            <person name="Komiyama M."/>
            <person name="Tashiro H."/>
            <person name="Tanigami A."/>
            <person name="Fujiwara T."/>
            <person name="Ono T."/>
            <person name="Yamada K."/>
            <person name="Fujii Y."/>
            <person name="Ozaki K."/>
            <person name="Hirao M."/>
            <person name="Ohmori Y."/>
            <person name="Kawabata A."/>
            <person name="Hikiji T."/>
            <person name="Kobatake N."/>
            <person name="Inagaki H."/>
            <person name="Ikema Y."/>
            <person name="Okamoto S."/>
            <person name="Okitani R."/>
            <person name="Kawakami T."/>
            <person name="Noguchi S."/>
            <person name="Itoh T."/>
            <person name="Shigeta K."/>
            <person name="Senba T."/>
            <person name="Matsumura K."/>
            <person name="Nakajima Y."/>
            <person name="Mizuno T."/>
            <person name="Morinaga M."/>
            <person name="Sasaki M."/>
            <person name="Togashi T."/>
            <person name="Oyama M."/>
            <person name="Hata H."/>
            <person name="Watanabe M."/>
            <person name="Komatsu T."/>
            <person name="Mizushima-Sugano J."/>
            <person name="Satoh T."/>
            <person name="Shirai Y."/>
            <person name="Takahashi Y."/>
            <person name="Nakagawa K."/>
            <person name="Okumura K."/>
            <person name="Nagase T."/>
            <person name="Nomura N."/>
            <person name="Kikuchi H."/>
            <person name="Masuho Y."/>
            <person name="Yamashita R."/>
            <person name="Nakai K."/>
            <person name="Yada T."/>
            <person name="Nakamura Y."/>
            <person name="Ohara O."/>
            <person name="Isogai T."/>
            <person name="Sugano S."/>
        </authorList>
    </citation>
    <scope>NUCLEOTIDE SEQUENCE [LARGE SCALE MRNA] OF 1035-1492 (ISOFORM 1)</scope>
</reference>
<reference key="9">
    <citation type="journal article" date="2006" name="Cell">
        <title>Global, in vivo, and site-specific phosphorylation dynamics in signaling networks.</title>
        <authorList>
            <person name="Olsen J.V."/>
            <person name="Blagoev B."/>
            <person name="Gnad F."/>
            <person name="Macek B."/>
            <person name="Kumar C."/>
            <person name="Mortensen P."/>
            <person name="Mann M."/>
        </authorList>
    </citation>
    <scope>PHOSPHORYLATION [LARGE SCALE ANALYSIS] AT SER-2059</scope>
    <scope>IDENTIFICATION BY MASS SPECTROMETRY [LARGE SCALE ANALYSIS]</scope>
    <source>
        <tissue>Cervix carcinoma</tissue>
    </source>
</reference>
<reference key="10">
    <citation type="journal article" date="2007" name="Microb. Pathog.">
        <title>The VP1 structural protein of enterovirus 71 interacts with human ornithine decarboxylase and gene trap ankyrin repeat.</title>
        <authorList>
            <person name="Yeo W.M."/>
            <person name="Chow V.T.K."/>
        </authorList>
    </citation>
    <scope>FUNCTION</scope>
    <scope>INTERACTION WITH ENTEROVIRUS 71 PROTEIN VP1 (MICROBIAL INFECTION)</scope>
    <scope>TISSUE SPECIFICITY</scope>
    <scope>SUBCELLULAR LOCATION</scope>
</reference>
<reference key="11">
    <citation type="journal article" date="2008" name="J. Proteome Res.">
        <title>Combining protein-based IMAC, peptide-based IMAC, and MudPIT for efficient phosphoproteomic analysis.</title>
        <authorList>
            <person name="Cantin G.T."/>
            <person name="Yi W."/>
            <person name="Lu B."/>
            <person name="Park S.K."/>
            <person name="Xu T."/>
            <person name="Lee J.-D."/>
            <person name="Yates J.R. III"/>
        </authorList>
    </citation>
    <scope>IDENTIFICATION BY MASS SPECTROMETRY [LARGE SCALE ANALYSIS]</scope>
    <source>
        <tissue>Cervix carcinoma</tissue>
    </source>
</reference>
<reference key="12">
    <citation type="journal article" date="2008" name="Proc. Natl. Acad. Sci. U.S.A.">
        <title>A quantitative atlas of mitotic phosphorylation.</title>
        <authorList>
            <person name="Dephoure N."/>
            <person name="Zhou C."/>
            <person name="Villen J."/>
            <person name="Beausoleil S.A."/>
            <person name="Bakalarski C.E."/>
            <person name="Elledge S.J."/>
            <person name="Gygi S.P."/>
        </authorList>
    </citation>
    <scope>PHOSPHORYLATION [LARGE SCALE ANALYSIS] AT SER-803; SER-1700; SER-1709; SER-2045; SER-2047 AND SER-2401</scope>
    <scope>IDENTIFICATION BY MASS SPECTROMETRY [LARGE SCALE ANALYSIS]</scope>
    <source>
        <tissue>Cervix carcinoma</tissue>
    </source>
</reference>
<reference key="13">
    <citation type="journal article" date="2009" name="Anal. Chem.">
        <title>Lys-N and trypsin cover complementary parts of the phosphoproteome in a refined SCX-based approach.</title>
        <authorList>
            <person name="Gauci S."/>
            <person name="Helbig A.O."/>
            <person name="Slijper M."/>
            <person name="Krijgsveld J."/>
            <person name="Heck A.J."/>
            <person name="Mohammed S."/>
        </authorList>
    </citation>
    <scope>IDENTIFICATION BY MASS SPECTROMETRY [LARGE SCALE ANALYSIS]</scope>
</reference>
<reference key="14">
    <citation type="journal article" date="2009" name="J. Biol. Chem.">
        <title>Identification and functional analysis of a novel cyclin e/cdk2 substrate ankrd17.</title>
        <authorList>
            <person name="Deng M."/>
            <person name="Li F."/>
            <person name="Ballif B.A."/>
            <person name="Li S."/>
            <person name="Chen X."/>
            <person name="Guo L."/>
            <person name="Ye X."/>
        </authorList>
    </citation>
    <scope>TISSUE SPECIFICITY</scope>
    <scope>INTERACTION WITH CDK2; MCM3; MCM5; MCM7; CDC6 AND PCNA</scope>
    <scope>SUBCELLULAR LOCATION</scope>
    <scope>PHOSPHORYLATION AT SER-2042; SER-2045 AND SER-2401 BY CDK2</scope>
    <scope>IDENTIFICATION BY MASS SPECTROMETRY</scope>
    <scope>FUNCTION</scope>
</reference>
<reference key="15">
    <citation type="journal article" date="2009" name="Sci. Signal.">
        <title>Quantitative phosphoproteomic analysis of T cell receptor signaling reveals system-wide modulation of protein-protein interactions.</title>
        <authorList>
            <person name="Mayya V."/>
            <person name="Lundgren D.H."/>
            <person name="Hwang S.-I."/>
            <person name="Rezaul K."/>
            <person name="Wu L."/>
            <person name="Eng J.K."/>
            <person name="Rodionov V."/>
            <person name="Han D.K."/>
        </authorList>
    </citation>
    <scope>PHOSPHORYLATION [LARGE SCALE ANALYSIS] AT SER-19; SER-1709; SER-2047 AND SER-2401</scope>
    <scope>IDENTIFICATION BY MASS SPECTROMETRY [LARGE SCALE ANALYSIS]</scope>
    <source>
        <tissue>Leukemic T-cell</tissue>
    </source>
</reference>
<reference key="16">
    <citation type="journal article" date="2010" name="Sci. Signal.">
        <title>Quantitative phosphoproteomics reveals widespread full phosphorylation site occupancy during mitosis.</title>
        <authorList>
            <person name="Olsen J.V."/>
            <person name="Vermeulen M."/>
            <person name="Santamaria A."/>
            <person name="Kumar C."/>
            <person name="Miller M.L."/>
            <person name="Jensen L.J."/>
            <person name="Gnad F."/>
            <person name="Cox J."/>
            <person name="Jensen T.S."/>
            <person name="Nigg E.A."/>
            <person name="Brunak S."/>
            <person name="Mann M."/>
        </authorList>
    </citation>
    <scope>PHOSPHORYLATION [LARGE SCALE ANALYSIS] AT SER-1457; SER-1709; SER-2047 AND SER-2067</scope>
    <scope>IDENTIFICATION BY MASS SPECTROMETRY [LARGE SCALE ANALYSIS]</scope>
    <source>
        <tissue>Cervix carcinoma</tissue>
    </source>
</reference>
<reference key="17">
    <citation type="journal article" date="2011" name="BMC Syst. Biol.">
        <title>Initial characterization of the human central proteome.</title>
        <authorList>
            <person name="Burkard T.R."/>
            <person name="Planyavsky M."/>
            <person name="Kaupe I."/>
            <person name="Breitwieser F.P."/>
            <person name="Buerckstuemmer T."/>
            <person name="Bennett K.L."/>
            <person name="Superti-Furga G."/>
            <person name="Colinge J."/>
        </authorList>
    </citation>
    <scope>IDENTIFICATION BY MASS SPECTROMETRY [LARGE SCALE ANALYSIS]</scope>
</reference>
<reference key="18">
    <citation type="journal article" date="2011" name="Sci. Signal.">
        <title>System-wide temporal characterization of the proteome and phosphoproteome of human embryonic stem cell differentiation.</title>
        <authorList>
            <person name="Rigbolt K.T."/>
            <person name="Prokhorova T.A."/>
            <person name="Akimov V."/>
            <person name="Henningsen J."/>
            <person name="Johansen P.T."/>
            <person name="Kratchmarova I."/>
            <person name="Kassem M."/>
            <person name="Mann M."/>
            <person name="Olsen J.V."/>
            <person name="Blagoev B."/>
        </authorList>
    </citation>
    <scope>PHOSPHORYLATION [LARGE SCALE ANALYSIS] AT SER-1635; SER-1696; SER-1709 AND SER-2047</scope>
    <scope>IDENTIFICATION BY MASS SPECTROMETRY [LARGE SCALE ANALYSIS]</scope>
</reference>
<reference key="19">
    <citation type="journal article" date="2012" name="Eur. J. Immunol.">
        <title>Ankrd17 positively regulates RIG-I-like receptor (RLR)-mediated immune signaling.</title>
        <authorList>
            <person name="Wang Y."/>
            <person name="Tong X."/>
            <person name="Li G."/>
            <person name="Li J."/>
            <person name="Deng M."/>
            <person name="Ye X."/>
        </authorList>
    </citation>
    <scope>INTERACTION WITH MAVS; IFIH1; DDX58</scope>
    <scope>SUBCELLULAR LOCATION</scope>
    <scope>FUNCTION</scope>
</reference>
<reference key="20">
    <citation type="journal article" date="2012" name="Proc. Natl. Acad. Sci. U.S.A.">
        <title>N-terminal acetylome analyses and functional insights of the N-terminal acetyltransferase NatB.</title>
        <authorList>
            <person name="Van Damme P."/>
            <person name="Lasa M."/>
            <person name="Polevoda B."/>
            <person name="Gazquez C."/>
            <person name="Elosegui-Artola A."/>
            <person name="Kim D.S."/>
            <person name="De Juan-Pardo E."/>
            <person name="Demeyer K."/>
            <person name="Hole K."/>
            <person name="Larrea E."/>
            <person name="Timmerman E."/>
            <person name="Prieto J."/>
            <person name="Arnesen T."/>
            <person name="Sherman F."/>
            <person name="Gevaert K."/>
            <person name="Aldabe R."/>
        </authorList>
    </citation>
    <scope>ACETYLATION [LARGE SCALE ANALYSIS] AT MET-1</scope>
    <scope>IDENTIFICATION BY MASS SPECTROMETRY [LARGE SCALE ANALYSIS]</scope>
</reference>
<reference key="21">
    <citation type="journal article" date="2013" name="FEBS Lett.">
        <title>A role for the Ankyrin repeat containing protein Ankrd17 in Nod1- and Nod2-mediated inflammatory responses.</title>
        <authorList>
            <person name="Menning M."/>
            <person name="Kufer T.A."/>
        </authorList>
    </citation>
    <scope>INTERACTION WITH NOD2</scope>
    <scope>FUNCTION</scope>
</reference>
<reference key="22">
    <citation type="journal article" date="2013" name="J. Proteome Res.">
        <title>Toward a comprehensive characterization of a human cancer cell phosphoproteome.</title>
        <authorList>
            <person name="Zhou H."/>
            <person name="Di Palma S."/>
            <person name="Preisinger C."/>
            <person name="Peng M."/>
            <person name="Polat A.N."/>
            <person name="Heck A.J."/>
            <person name="Mohammed S."/>
        </authorList>
    </citation>
    <scope>PHOSPHORYLATION [LARGE SCALE ANALYSIS] AT SER-156; SER-1457; SER-1639; SER-1696; SER-1709; SER-2045; SER-2047; SER-2067; SER-2373 AND SER-2401</scope>
    <scope>IDENTIFICATION BY MASS SPECTROMETRY [LARGE SCALE ANALYSIS]</scope>
    <source>
        <tissue>Cervix carcinoma</tissue>
        <tissue>Erythroleukemia</tissue>
    </source>
</reference>
<reference key="23">
    <citation type="journal article" date="2014" name="J. Proteomics">
        <title>An enzyme assisted RP-RPLC approach for in-depth analysis of human liver phosphoproteome.</title>
        <authorList>
            <person name="Bian Y."/>
            <person name="Song C."/>
            <person name="Cheng K."/>
            <person name="Dong M."/>
            <person name="Wang F."/>
            <person name="Huang J."/>
            <person name="Sun D."/>
            <person name="Wang L."/>
            <person name="Ye M."/>
            <person name="Zou H."/>
        </authorList>
    </citation>
    <scope>PHOSPHORYLATION [LARGE SCALE ANALYSIS] AT SER-2045; SER-2047 AND SER-2059</scope>
    <scope>IDENTIFICATION BY MASS SPECTROMETRY [LARGE SCALE ANALYSIS]</scope>
    <source>
        <tissue>Liver</tissue>
    </source>
</reference>
<reference key="24">
    <citation type="journal article" date="2017" name="Nat. Struct. Mol. Biol.">
        <title>Site-specific mapping of the human SUMO proteome reveals co-modification with phosphorylation.</title>
        <authorList>
            <person name="Hendriks I.A."/>
            <person name="Lyon D."/>
            <person name="Young C."/>
            <person name="Jensen L.J."/>
            <person name="Vertegaal A.C."/>
            <person name="Nielsen M.L."/>
        </authorList>
    </citation>
    <scope>SUMOYLATION [LARGE SCALE ANALYSIS] AT LYS-318</scope>
    <scope>IDENTIFICATION BY MASS SPECTROMETRY [LARGE SCALE ANALYSIS]</scope>
</reference>
<reference key="25">
    <citation type="journal article" date="2021" name="Am. J. Hum. Genet.">
        <title>Heterozygous ANKRD17 loss-of-function variants cause a syndrome with intellectual disability, speech delay, and dysmorphism.</title>
        <authorList>
            <person name="Chopra M."/>
            <person name="McEntagart M."/>
            <person name="Clayton-Smith J."/>
            <person name="Platzer K."/>
            <person name="Shukla A."/>
            <person name="Girisha K.M."/>
            <person name="Kaur A."/>
            <person name="Kaur P."/>
            <person name="Pfundt R."/>
            <person name="Veenstra-Knol H."/>
            <person name="Mancini G.M.S."/>
            <person name="Cappuccio G."/>
            <person name="Brunetti-Pierri N."/>
            <person name="Kortuem F."/>
            <person name="Hempel M."/>
            <person name="Denecke J."/>
            <person name="Lehman A."/>
            <person name="Kleefstra T."/>
            <person name="Stuurman K.E."/>
            <person name="Wilke M."/>
            <person name="Thompson M.L."/>
            <person name="Bebin E.M."/>
            <person name="Bijlsma E.K."/>
            <person name="Hoffer M.J.V."/>
            <person name="Peeters-Scholte C."/>
            <person name="Slavotinek A."/>
            <person name="Weiss W.A."/>
            <person name="Yip T."/>
            <person name="Hodoglugil U."/>
            <person name="Whittle A."/>
            <person name="diMonda J."/>
            <person name="Neira J."/>
            <person name="Yang S."/>
            <person name="Kirby A."/>
            <person name="Pinz H."/>
            <person name="Lechner R."/>
            <person name="Sleutels F."/>
            <person name="Helbig I."/>
            <person name="McKeown S."/>
            <person name="Helbig K."/>
            <person name="Willaert R."/>
            <person name="Juusola J."/>
            <person name="Semotok J."/>
            <person name="Hadonou M."/>
            <person name="Short J."/>
            <person name="Yachelevich N."/>
            <person name="Lala S."/>
            <person name="Fernandez-Jaen A."/>
            <person name="Pelayo J.P."/>
            <person name="Kloeckner C."/>
            <person name="Kamphausen S.B."/>
            <person name="Abou Jamra R."/>
            <person name="Arelin M."/>
            <person name="Innes A.M."/>
            <person name="Niskakoski A."/>
            <person name="Amin S."/>
            <person name="Williams M."/>
            <person name="Evans J."/>
            <person name="Smithson S."/>
            <person name="Smedley D."/>
            <person name="de Burca A."/>
            <person name="Kini U."/>
            <person name="Delatycki M.B."/>
            <person name="Gallacher L."/>
            <person name="Yeung A."/>
            <person name="Pais L."/>
            <person name="Field M."/>
            <person name="Martin E."/>
            <person name="Charles P."/>
            <person name="Courtin T."/>
            <person name="Keren B."/>
            <person name="Iascone M."/>
            <person name="Cereda A."/>
            <person name="Poke G."/>
            <person name="Abadie V."/>
            <person name="Chalouhi C."/>
            <person name="Parthasarathy P."/>
            <person name="Halliday B.J."/>
            <person name="Robertson S.P."/>
            <person name="Lyonnet S."/>
            <person name="Amiel J."/>
            <person name="Gordon C.T."/>
        </authorList>
    </citation>
    <scope>INVOLVEMENT IN CAGS</scope>
    <scope>VARIANTS CAGS VAL-278; THR-377; PRO-519; ARG-716; 833-GLN--GLY-2603 DEL; 906-CYS--GLY-2603 DEL; ARG-1120; ARG-1186; ALA-1364; 1468-LEU--GLY-2603 DEL; PRO-1880 AND GLY-2434</scope>
</reference>
<accession>O75179</accession>
<accession>E7EUV3</accession>
<accession>G5E964</accession>
<accession>Q6PJ85</accession>
<accession>Q6PK85</accession>
<accession>Q6PKA2</accession>
<accession>Q86XI3</accession>
<accession>Q8NDR5</accession>
<accession>Q96I86</accession>
<accession>Q9H288</accession>
<accession>Q9H6J9</accession>
<evidence type="ECO:0000250" key="1">
    <source>
        <dbReference type="UniProtKB" id="Q99NH0"/>
    </source>
</evidence>
<evidence type="ECO:0000255" key="2"/>
<evidence type="ECO:0000255" key="3">
    <source>
        <dbReference type="PROSITE-ProRule" id="PRU00117"/>
    </source>
</evidence>
<evidence type="ECO:0000256" key="4">
    <source>
        <dbReference type="SAM" id="MobiDB-lite"/>
    </source>
</evidence>
<evidence type="ECO:0000269" key="5">
    <source>
    </source>
</evidence>
<evidence type="ECO:0000269" key="6">
    <source>
    </source>
</evidence>
<evidence type="ECO:0000269" key="7">
    <source>
    </source>
</evidence>
<evidence type="ECO:0000269" key="8">
    <source>
    </source>
</evidence>
<evidence type="ECO:0000269" key="9">
    <source>
    </source>
</evidence>
<evidence type="ECO:0000303" key="10">
    <source>
    </source>
</evidence>
<evidence type="ECO:0000303" key="11">
    <source>
    </source>
</evidence>
<evidence type="ECO:0000303" key="12">
    <source>
    </source>
</evidence>
<evidence type="ECO:0000305" key="13"/>
<evidence type="ECO:0007744" key="14">
    <source>
    </source>
</evidence>
<evidence type="ECO:0007744" key="15">
    <source>
    </source>
</evidence>
<evidence type="ECO:0007744" key="16">
    <source>
    </source>
</evidence>
<evidence type="ECO:0007744" key="17">
    <source>
    </source>
</evidence>
<evidence type="ECO:0007744" key="18">
    <source>
    </source>
</evidence>
<evidence type="ECO:0007744" key="19">
    <source>
    </source>
</evidence>
<evidence type="ECO:0007744" key="20">
    <source>
    </source>
</evidence>
<evidence type="ECO:0007744" key="21">
    <source>
    </source>
</evidence>
<evidence type="ECO:0007744" key="22">
    <source>
    </source>
</evidence>
<protein>
    <recommendedName>
        <fullName>Ankyrin repeat domain-containing protein 17</fullName>
    </recommendedName>
    <alternativeName>
        <fullName>Gene trap ankyrin repeat protein</fullName>
    </alternativeName>
    <alternativeName>
        <fullName>Serologically defined breast cancer antigen NY-BR-16</fullName>
    </alternativeName>
</protein>
<feature type="chain" id="PRO_0000307917" description="Ankyrin repeat domain-containing protein 17">
    <location>
        <begin position="1"/>
        <end position="2603"/>
    </location>
</feature>
<feature type="repeat" description="ANK 1">
    <location>
        <begin position="233"/>
        <end position="262"/>
    </location>
</feature>
<feature type="repeat" description="ANK 2">
    <location>
        <begin position="266"/>
        <end position="295"/>
    </location>
</feature>
<feature type="repeat" description="ANK 3">
    <location>
        <begin position="300"/>
        <end position="329"/>
    </location>
</feature>
<feature type="repeat" description="ANK 4">
    <location>
        <begin position="333"/>
        <end position="362"/>
    </location>
</feature>
<feature type="repeat" description="ANK 5">
    <location>
        <begin position="366"/>
        <end position="395"/>
    </location>
</feature>
<feature type="repeat" description="ANK 6">
    <location>
        <begin position="400"/>
        <end position="429"/>
    </location>
</feature>
<feature type="repeat" description="ANK 7">
    <location>
        <begin position="433"/>
        <end position="462"/>
    </location>
</feature>
<feature type="repeat" description="ANK 8">
    <location>
        <begin position="466"/>
        <end position="495"/>
    </location>
</feature>
<feature type="repeat" description="ANK 9">
    <location>
        <begin position="499"/>
        <end position="528"/>
    </location>
</feature>
<feature type="repeat" description="ANK 10">
    <location>
        <begin position="533"/>
        <end position="562"/>
    </location>
</feature>
<feature type="repeat" description="ANK 11">
    <location>
        <begin position="563"/>
        <end position="592"/>
    </location>
</feature>
<feature type="repeat" description="ANK 12">
    <location>
        <begin position="596"/>
        <end position="625"/>
    </location>
</feature>
<feature type="repeat" description="ANK 13">
    <location>
        <begin position="629"/>
        <end position="658"/>
    </location>
</feature>
<feature type="repeat" description="ANK 14">
    <location>
        <begin position="663"/>
        <end position="692"/>
    </location>
</feature>
<feature type="repeat" description="ANK 15">
    <location>
        <begin position="696"/>
        <end position="725"/>
    </location>
</feature>
<feature type="repeat" description="ANK 16">
    <location>
        <begin position="1082"/>
        <end position="1111"/>
    </location>
</feature>
<feature type="repeat" description="ANK 17">
    <location>
        <begin position="1115"/>
        <end position="1144"/>
    </location>
</feature>
<feature type="repeat" description="ANK 18">
    <location>
        <begin position="1149"/>
        <end position="1178"/>
    </location>
</feature>
<feature type="repeat" description="ANK 19">
    <location>
        <begin position="1182"/>
        <end position="1211"/>
    </location>
</feature>
<feature type="repeat" description="ANK 20">
    <location>
        <begin position="1217"/>
        <end position="1246"/>
    </location>
</feature>
<feature type="repeat" description="ANK 21">
    <location>
        <begin position="1251"/>
        <end position="1280"/>
    </location>
</feature>
<feature type="repeat" description="ANK 22">
    <location>
        <begin position="1284"/>
        <end position="1313"/>
    </location>
</feature>
<feature type="repeat" description="ANK 23">
    <location>
        <begin position="1319"/>
        <end position="1348"/>
    </location>
</feature>
<feature type="repeat" description="ANK 24">
    <location>
        <begin position="1352"/>
        <end position="1381"/>
    </location>
</feature>
<feature type="repeat" description="ANK 25">
    <location>
        <begin position="1385"/>
        <end position="1414"/>
    </location>
</feature>
<feature type="domain" description="KH" evidence="3">
    <location>
        <begin position="1725"/>
        <end position="1789"/>
    </location>
</feature>
<feature type="region of interest" description="Disordered" evidence="4">
    <location>
        <begin position="1"/>
        <end position="143"/>
    </location>
</feature>
<feature type="region of interest" description="Disordered" evidence="4">
    <location>
        <begin position="1479"/>
        <end position="1500"/>
    </location>
</feature>
<feature type="region of interest" description="Disordered" evidence="4">
    <location>
        <begin position="1517"/>
        <end position="1717"/>
    </location>
</feature>
<feature type="region of interest" description="Disordered" evidence="4">
    <location>
        <begin position="1906"/>
        <end position="1995"/>
    </location>
</feature>
<feature type="region of interest" description="Disordered" evidence="4">
    <location>
        <begin position="2011"/>
        <end position="2192"/>
    </location>
</feature>
<feature type="region of interest" description="Disordered" evidence="4">
    <location>
        <begin position="2273"/>
        <end position="2332"/>
    </location>
</feature>
<feature type="region of interest" description="Disordered" evidence="4">
    <location>
        <begin position="2381"/>
        <end position="2423"/>
    </location>
</feature>
<feature type="coiled-coil region" evidence="2">
    <location>
        <begin position="1442"/>
        <end position="1526"/>
    </location>
</feature>
<feature type="compositionally biased region" description="Low complexity" evidence="4">
    <location>
        <begin position="1"/>
        <end position="34"/>
    </location>
</feature>
<feature type="compositionally biased region" description="Low complexity" evidence="4">
    <location>
        <begin position="42"/>
        <end position="53"/>
    </location>
</feature>
<feature type="compositionally biased region" description="Basic residues" evidence="4">
    <location>
        <begin position="63"/>
        <end position="79"/>
    </location>
</feature>
<feature type="compositionally biased region" description="Low complexity" evidence="4">
    <location>
        <begin position="84"/>
        <end position="94"/>
    </location>
</feature>
<feature type="compositionally biased region" description="Gly residues" evidence="4">
    <location>
        <begin position="95"/>
        <end position="111"/>
    </location>
</feature>
<feature type="compositionally biased region" description="Acidic residues" evidence="4">
    <location>
        <begin position="116"/>
        <end position="131"/>
    </location>
</feature>
<feature type="compositionally biased region" description="Basic residues" evidence="4">
    <location>
        <begin position="1481"/>
        <end position="1491"/>
    </location>
</feature>
<feature type="compositionally biased region" description="Low complexity" evidence="4">
    <location>
        <begin position="1531"/>
        <end position="1550"/>
    </location>
</feature>
<feature type="compositionally biased region" description="Low complexity" evidence="4">
    <location>
        <begin position="1602"/>
        <end position="1611"/>
    </location>
</feature>
<feature type="compositionally biased region" description="Low complexity" evidence="4">
    <location>
        <begin position="1620"/>
        <end position="1632"/>
    </location>
</feature>
<feature type="compositionally biased region" description="Polar residues" evidence="4">
    <location>
        <begin position="1642"/>
        <end position="1652"/>
    </location>
</feature>
<feature type="compositionally biased region" description="Polar residues" evidence="4">
    <location>
        <begin position="1675"/>
        <end position="1703"/>
    </location>
</feature>
<feature type="compositionally biased region" description="Low complexity" evidence="4">
    <location>
        <begin position="1950"/>
        <end position="1995"/>
    </location>
</feature>
<feature type="compositionally biased region" description="Low complexity" evidence="4">
    <location>
        <begin position="2011"/>
        <end position="2028"/>
    </location>
</feature>
<feature type="compositionally biased region" description="Polar residues" evidence="4">
    <location>
        <begin position="2066"/>
        <end position="2078"/>
    </location>
</feature>
<feature type="compositionally biased region" description="Low complexity" evidence="4">
    <location>
        <begin position="2095"/>
        <end position="2106"/>
    </location>
</feature>
<feature type="compositionally biased region" description="Polar residues" evidence="4">
    <location>
        <begin position="2107"/>
        <end position="2127"/>
    </location>
</feature>
<feature type="compositionally biased region" description="Polar residues" evidence="4">
    <location>
        <begin position="2273"/>
        <end position="2303"/>
    </location>
</feature>
<feature type="compositionally biased region" description="Pro residues" evidence="4">
    <location>
        <begin position="2308"/>
        <end position="2318"/>
    </location>
</feature>
<feature type="compositionally biased region" description="Low complexity" evidence="4">
    <location>
        <begin position="2382"/>
        <end position="2411"/>
    </location>
</feature>
<feature type="modified residue" description="N-acetylmethionine" evidence="19">
    <location>
        <position position="1"/>
    </location>
</feature>
<feature type="modified residue" description="Phosphoserine" evidence="16">
    <location>
        <position position="19"/>
    </location>
</feature>
<feature type="modified residue" description="Phosphoserine" evidence="1">
    <location>
        <position position="50"/>
    </location>
</feature>
<feature type="modified residue" description="Phosphoserine" evidence="20">
    <location>
        <position position="156"/>
    </location>
</feature>
<feature type="modified residue" description="Phosphoserine" evidence="15">
    <location>
        <position position="803"/>
    </location>
</feature>
<feature type="modified residue" description="Phosphoserine" evidence="17 20">
    <location>
        <position position="1457"/>
    </location>
</feature>
<feature type="modified residue" description="Phosphoserine" evidence="18">
    <location>
        <position position="1635"/>
    </location>
</feature>
<feature type="modified residue" description="Phosphoserine" evidence="20">
    <location>
        <position position="1639"/>
    </location>
</feature>
<feature type="modified residue" description="Phosphoserine" evidence="18 20">
    <location>
        <position position="1696"/>
    </location>
</feature>
<feature type="modified residue" description="Phosphoserine" evidence="15">
    <location>
        <position position="1700"/>
    </location>
</feature>
<feature type="modified residue" description="Phosphoserine" evidence="15 16 17 18 20">
    <location>
        <position position="1709"/>
    </location>
</feature>
<feature type="modified residue" description="Asymmetric dimethylarginine" evidence="1">
    <location>
        <position position="1874"/>
    </location>
</feature>
<feature type="modified residue" description="Phosphoserine" evidence="6">
    <location>
        <position position="2042"/>
    </location>
</feature>
<feature type="modified residue" description="Phosphoserine" evidence="1">
    <location>
        <position position="2044"/>
    </location>
</feature>
<feature type="modified residue" description="Phosphoserine" evidence="6 15 20 21">
    <location>
        <position position="2045"/>
    </location>
</feature>
<feature type="modified residue" description="Phosphoserine" evidence="15 16 17 18 20 21">
    <location>
        <position position="2047"/>
    </location>
</feature>
<feature type="modified residue" description="Phosphoserine" evidence="14 21">
    <location>
        <position position="2059"/>
    </location>
</feature>
<feature type="modified residue" description="Phosphoserine" evidence="17 20">
    <location>
        <position position="2067"/>
    </location>
</feature>
<feature type="modified residue" description="Phosphoserine" evidence="20">
    <location>
        <position position="2373"/>
    </location>
</feature>
<feature type="modified residue" description="Phosphoserine" evidence="15 16 20">
    <location>
        <position position="2401"/>
    </location>
</feature>
<feature type="cross-link" description="Glycyl lysine isopeptide (Lys-Gly) (interchain with G-Cter in SUMO2)" evidence="22">
    <location>
        <position position="318"/>
    </location>
</feature>
<feature type="splice variant" id="VSP_054757" description="In isoform 7." evidence="13">
    <original>MEKATVPVAAATAAEGEGSPPAVAAVAGPPAAAEVGGGVGGSSRARSASSPRGMVRVCDLLLKKKPPQQQHHKAKRNRTCRPPSSSESSSDSDNSGGGGGGGGGGGGGGGTSSNNSEEEEDDDDEEEEVS</original>
    <variation>MVETAAEMEAYVLEDIL</variation>
    <location>
        <begin position="1"/>
        <end position="130"/>
    </location>
</feature>
<feature type="splice variant" id="VSP_028859" description="In isoform 5." evidence="11">
    <original>NRAPRVPVQA</original>
    <variation>TDNIFPRLVC</variation>
    <location>
        <begin position="742"/>
        <end position="751"/>
    </location>
</feature>
<feature type="splice variant" id="VSP_028860" description="In isoform 5." evidence="11">
    <location>
        <begin position="752"/>
        <end position="2603"/>
    </location>
</feature>
<feature type="splice variant" id="VSP_047048" description="In isoform 6." evidence="13">
    <location>
        <begin position="778"/>
        <end position="1028"/>
    </location>
</feature>
<feature type="splice variant" id="VSP_028861" description="In isoform 4." evidence="11">
    <original>GVIVGQPVLGQAQLAGLGQGILTETQQGL</original>
    <variation>VLSSLLQPCFLSTLPLILMHRLRVIMTRR</variation>
    <location>
        <begin position="982"/>
        <end position="1010"/>
    </location>
</feature>
<feature type="splice variant" id="VSP_028862" description="In isoform 4." evidence="11">
    <location>
        <begin position="1011"/>
        <end position="1603"/>
    </location>
</feature>
<feature type="splice variant" id="VSP_028863" description="In isoform 2." evidence="12">
    <location>
        <position position="1028"/>
    </location>
</feature>
<feature type="splice variant" id="VSP_028864" description="In isoform 3." evidence="10">
    <original>KEHRNVSDYTPL</original>
    <variation>YRSTGMVLITHL</variation>
    <location>
        <begin position="1176"/>
        <end position="1187"/>
    </location>
</feature>
<feature type="splice variant" id="VSP_028865" description="In isoform 3." evidence="10">
    <location>
        <begin position="1188"/>
        <end position="2603"/>
    </location>
</feature>
<feature type="sequence variant" id="VAR_086093" description="In CAGS; dbSNP:rs963581326." evidence="9">
    <original>G</original>
    <variation>V</variation>
    <location>
        <position position="278"/>
    </location>
</feature>
<feature type="sequence variant" id="VAR_086094" description="In CAGS." evidence="9">
    <original>A</original>
    <variation>T</variation>
    <location>
        <position position="377"/>
    </location>
</feature>
<feature type="sequence variant" id="VAR_086095" description="In CAGS; dbSNP:rs2148854716." evidence="9">
    <original>L</original>
    <variation>P</variation>
    <location>
        <position position="519"/>
    </location>
</feature>
<feature type="sequence variant" id="VAR_086096" description="In CAGS; dbSNP:rs2148821952." evidence="9">
    <original>L</original>
    <variation>R</variation>
    <location>
        <position position="716"/>
    </location>
</feature>
<feature type="sequence variant" id="VAR_086097" description="In CAGS; dbSNP:rs554386947." evidence="9">
    <location>
        <begin position="833"/>
        <end position="2603"/>
    </location>
</feature>
<feature type="sequence variant" id="VAR_086099" description="In CAGS." evidence="9">
    <location>
        <begin position="906"/>
        <end position="2603"/>
    </location>
</feature>
<feature type="sequence variant" id="VAR_086100" description="In CAGS; dbSNP:rs2148719956." evidence="9">
    <original>L</original>
    <variation>R</variation>
    <location>
        <position position="1120"/>
    </location>
</feature>
<feature type="sequence variant" id="VAR_086101" description="In CAGS; dbSNP:rs2148701869." evidence="9">
    <original>P</original>
    <variation>R</variation>
    <location>
        <position position="1186"/>
    </location>
</feature>
<feature type="sequence variant" id="VAR_086102" description="In CAGS; dbSNP:rs2148684587." evidence="9">
    <original>G</original>
    <variation>A</variation>
    <location>
        <position position="1364"/>
    </location>
</feature>
<feature type="sequence variant" id="VAR_086103" description="In CAGS." evidence="9">
    <location>
        <begin position="1468"/>
        <end position="2603"/>
    </location>
</feature>
<feature type="sequence variant" id="VAR_086104" description="In CAGS; dbSNP:rs2110165980." evidence="9">
    <original>S</original>
    <variation>P</variation>
    <location>
        <position position="1880"/>
    </location>
</feature>
<feature type="sequence variant" id="VAR_086105" description="In CAGS; dbSNP:rs143161842." evidence="9">
    <original>R</original>
    <variation>G</variation>
    <location>
        <position position="2434"/>
    </location>
</feature>
<feature type="sequence variant" id="VAR_036711" description="In dbSNP:rs2306059.">
    <original>H</original>
    <variation>Y</variation>
    <location>
        <position position="2560"/>
    </location>
</feature>
<feature type="sequence conflict" description="In Ref. 5; BAA31672." evidence="13" ref="5">
    <original>P</original>
    <variation>S</variation>
    <location>
        <position position="304"/>
    </location>
</feature>
<feature type="sequence conflict" description="In Ref. 1; AAG48253." evidence="13" ref="1">
    <original>A</original>
    <variation>P</variation>
    <location>
        <position position="705"/>
    </location>
</feature>
<feature type="sequence conflict" description="In Ref. 1; AAG48253." evidence="13" ref="1">
    <original>V</original>
    <variation>G</variation>
    <location>
        <position position="713"/>
    </location>
</feature>
<feature type="sequence conflict" description="In Ref. 8; BAB15260." evidence="13" ref="8">
    <original>D</original>
    <variation>G</variation>
    <location>
        <position position="1137"/>
    </location>
</feature>
<feature type="sequence conflict" description="In Ref. 1; AAG48253." evidence="13" ref="1">
    <original>Q</original>
    <variation>P</variation>
    <location>
        <position position="1163"/>
    </location>
</feature>
<feature type="sequence conflict" description="In Ref. 7; CAD38571." evidence="13" ref="7">
    <location>
        <position position="1391"/>
    </location>
</feature>